<organism>
    <name type="scientific">Yersinia pseudotuberculosis serotype O:3 (strain YPIII)</name>
    <dbReference type="NCBI Taxonomy" id="502800"/>
    <lineage>
        <taxon>Bacteria</taxon>
        <taxon>Pseudomonadati</taxon>
        <taxon>Pseudomonadota</taxon>
        <taxon>Gammaproteobacteria</taxon>
        <taxon>Enterobacterales</taxon>
        <taxon>Yersiniaceae</taxon>
        <taxon>Yersinia</taxon>
    </lineage>
</organism>
<sequence length="195" mass="21459">MQPNITGVILAGGRSSRMGGNDKGLIPLNGKPLFQYVIDRFKPQVSDLLINANRNQGLYKESGIPVIDDIITGFVGPLAGMHAGLSYASTEWVVFAPCDVPALPSDLVSQLWQGKKQALAAYANDDERAHPTFALMHISLKTQLADYLIRGDRKLMLFLDSINAQRVKFSGKADLFSNLNTPADCDLWEQKRRGQ</sequence>
<name>MOBA_YERPY</name>
<accession>B1JR17</accession>
<feature type="chain" id="PRO_1000115813" description="Molybdenum cofactor guanylyltransferase">
    <location>
        <begin position="1"/>
        <end position="195"/>
    </location>
</feature>
<feature type="binding site" evidence="1">
    <location>
        <begin position="10"/>
        <end position="12"/>
    </location>
    <ligand>
        <name>GTP</name>
        <dbReference type="ChEBI" id="CHEBI:37565"/>
    </ligand>
</feature>
<feature type="binding site" evidence="1">
    <location>
        <position position="23"/>
    </location>
    <ligand>
        <name>GTP</name>
        <dbReference type="ChEBI" id="CHEBI:37565"/>
    </ligand>
</feature>
<feature type="binding site" evidence="1">
    <location>
        <position position="51"/>
    </location>
    <ligand>
        <name>GTP</name>
        <dbReference type="ChEBI" id="CHEBI:37565"/>
    </ligand>
</feature>
<feature type="binding site" evidence="1">
    <location>
        <position position="69"/>
    </location>
    <ligand>
        <name>GTP</name>
        <dbReference type="ChEBI" id="CHEBI:37565"/>
    </ligand>
</feature>
<feature type="binding site" evidence="1">
    <location>
        <position position="99"/>
    </location>
    <ligand>
        <name>GTP</name>
        <dbReference type="ChEBI" id="CHEBI:37565"/>
    </ligand>
</feature>
<feature type="binding site" evidence="1">
    <location>
        <position position="99"/>
    </location>
    <ligand>
        <name>Mg(2+)</name>
        <dbReference type="ChEBI" id="CHEBI:18420"/>
    </ligand>
</feature>
<comment type="function">
    <text evidence="1">Transfers a GMP moiety from GTP to Mo-molybdopterin (Mo-MPT) cofactor (Moco or molybdenum cofactor) to form Mo-molybdopterin guanine dinucleotide (Mo-MGD) cofactor.</text>
</comment>
<comment type="catalytic activity">
    <reaction evidence="1">
        <text>Mo-molybdopterin + GTP + H(+) = Mo-molybdopterin guanine dinucleotide + diphosphate</text>
        <dbReference type="Rhea" id="RHEA:34243"/>
        <dbReference type="ChEBI" id="CHEBI:15378"/>
        <dbReference type="ChEBI" id="CHEBI:33019"/>
        <dbReference type="ChEBI" id="CHEBI:37565"/>
        <dbReference type="ChEBI" id="CHEBI:71302"/>
        <dbReference type="ChEBI" id="CHEBI:71310"/>
        <dbReference type="EC" id="2.7.7.77"/>
    </reaction>
</comment>
<comment type="cofactor">
    <cofactor evidence="1">
        <name>Mg(2+)</name>
        <dbReference type="ChEBI" id="CHEBI:18420"/>
    </cofactor>
</comment>
<comment type="subunit">
    <text evidence="1">Monomer.</text>
</comment>
<comment type="subcellular location">
    <subcellularLocation>
        <location evidence="1">Cytoplasm</location>
    </subcellularLocation>
</comment>
<comment type="domain">
    <text evidence="1">The N-terminal domain determines nucleotide recognition and specific binding, while the C-terminal domain determines the specific binding to the target protein.</text>
</comment>
<comment type="similarity">
    <text evidence="1">Belongs to the MobA family.</text>
</comment>
<evidence type="ECO:0000255" key="1">
    <source>
        <dbReference type="HAMAP-Rule" id="MF_00316"/>
    </source>
</evidence>
<gene>
    <name evidence="1" type="primary">mobA</name>
    <name type="ordered locus">YPK_4199</name>
</gene>
<reference key="1">
    <citation type="submission" date="2008-02" db="EMBL/GenBank/DDBJ databases">
        <title>Complete sequence of Yersinia pseudotuberculosis YPIII.</title>
        <authorList>
            <consortium name="US DOE Joint Genome Institute"/>
            <person name="Copeland A."/>
            <person name="Lucas S."/>
            <person name="Lapidus A."/>
            <person name="Glavina del Rio T."/>
            <person name="Dalin E."/>
            <person name="Tice H."/>
            <person name="Bruce D."/>
            <person name="Goodwin L."/>
            <person name="Pitluck S."/>
            <person name="Munk A.C."/>
            <person name="Brettin T."/>
            <person name="Detter J.C."/>
            <person name="Han C."/>
            <person name="Tapia R."/>
            <person name="Schmutz J."/>
            <person name="Larimer F."/>
            <person name="Land M."/>
            <person name="Hauser L."/>
            <person name="Challacombe J.F."/>
            <person name="Green L."/>
            <person name="Lindler L.E."/>
            <person name="Nikolich M.P."/>
            <person name="Richardson P."/>
        </authorList>
    </citation>
    <scope>NUCLEOTIDE SEQUENCE [LARGE SCALE GENOMIC DNA]</scope>
    <source>
        <strain>YPIII</strain>
    </source>
</reference>
<proteinExistence type="inferred from homology"/>
<keyword id="KW-0963">Cytoplasm</keyword>
<keyword id="KW-0342">GTP-binding</keyword>
<keyword id="KW-0460">Magnesium</keyword>
<keyword id="KW-0479">Metal-binding</keyword>
<keyword id="KW-0501">Molybdenum cofactor biosynthesis</keyword>
<keyword id="KW-0547">Nucleotide-binding</keyword>
<keyword id="KW-0808">Transferase</keyword>
<protein>
    <recommendedName>
        <fullName evidence="1">Molybdenum cofactor guanylyltransferase</fullName>
        <shortName evidence="1">MoCo guanylyltransferase</shortName>
        <ecNumber evidence="1">2.7.7.77</ecNumber>
    </recommendedName>
    <alternativeName>
        <fullName evidence="1">GTP:molybdopterin guanylyltransferase</fullName>
    </alternativeName>
    <alternativeName>
        <fullName evidence="1">Mo-MPT guanylyltransferase</fullName>
    </alternativeName>
    <alternativeName>
        <fullName evidence="1">Molybdopterin guanylyltransferase</fullName>
    </alternativeName>
    <alternativeName>
        <fullName evidence="1">Molybdopterin-guanine dinucleotide synthase</fullName>
        <shortName evidence="1">MGD synthase</shortName>
    </alternativeName>
</protein>
<dbReference type="EC" id="2.7.7.77" evidence="1"/>
<dbReference type="EMBL" id="CP000950">
    <property type="protein sequence ID" value="ACA70458.1"/>
    <property type="molecule type" value="Genomic_DNA"/>
</dbReference>
<dbReference type="RefSeq" id="WP_011991007.1">
    <property type="nucleotide sequence ID" value="NZ_CP009792.1"/>
</dbReference>
<dbReference type="SMR" id="B1JR17"/>
<dbReference type="GeneID" id="49788018"/>
<dbReference type="KEGG" id="ypy:YPK_4199"/>
<dbReference type="PATRIC" id="fig|502800.11.peg.553"/>
<dbReference type="GO" id="GO:0005737">
    <property type="term" value="C:cytoplasm"/>
    <property type="evidence" value="ECO:0007669"/>
    <property type="project" value="UniProtKB-SubCell"/>
</dbReference>
<dbReference type="GO" id="GO:0005525">
    <property type="term" value="F:GTP binding"/>
    <property type="evidence" value="ECO:0007669"/>
    <property type="project" value="UniProtKB-UniRule"/>
</dbReference>
<dbReference type="GO" id="GO:0046872">
    <property type="term" value="F:metal ion binding"/>
    <property type="evidence" value="ECO:0007669"/>
    <property type="project" value="UniProtKB-KW"/>
</dbReference>
<dbReference type="GO" id="GO:0061603">
    <property type="term" value="F:molybdenum cofactor guanylyltransferase activity"/>
    <property type="evidence" value="ECO:0007669"/>
    <property type="project" value="UniProtKB-EC"/>
</dbReference>
<dbReference type="GO" id="GO:1902758">
    <property type="term" value="P:bis(molybdopterin guanine dinucleotide)molybdenum biosynthetic process"/>
    <property type="evidence" value="ECO:0007669"/>
    <property type="project" value="TreeGrafter"/>
</dbReference>
<dbReference type="CDD" id="cd02503">
    <property type="entry name" value="MobA"/>
    <property type="match status" value="1"/>
</dbReference>
<dbReference type="Gene3D" id="3.90.550.10">
    <property type="entry name" value="Spore Coat Polysaccharide Biosynthesis Protein SpsA, Chain A"/>
    <property type="match status" value="1"/>
</dbReference>
<dbReference type="HAMAP" id="MF_00316">
    <property type="entry name" value="MobA"/>
    <property type="match status" value="1"/>
</dbReference>
<dbReference type="InterPro" id="IPR025877">
    <property type="entry name" value="MobA-like_NTP_Trfase"/>
</dbReference>
<dbReference type="InterPro" id="IPR013482">
    <property type="entry name" value="Molybde_CF_guanTrfase"/>
</dbReference>
<dbReference type="InterPro" id="IPR029044">
    <property type="entry name" value="Nucleotide-diphossugar_trans"/>
</dbReference>
<dbReference type="NCBIfam" id="TIGR02665">
    <property type="entry name" value="molyb_mobA"/>
    <property type="match status" value="1"/>
</dbReference>
<dbReference type="PANTHER" id="PTHR19136">
    <property type="entry name" value="MOLYBDENUM COFACTOR GUANYLYLTRANSFERASE"/>
    <property type="match status" value="1"/>
</dbReference>
<dbReference type="PANTHER" id="PTHR19136:SF81">
    <property type="entry name" value="MOLYBDENUM COFACTOR GUANYLYLTRANSFERASE"/>
    <property type="match status" value="1"/>
</dbReference>
<dbReference type="Pfam" id="PF12804">
    <property type="entry name" value="NTP_transf_3"/>
    <property type="match status" value="1"/>
</dbReference>
<dbReference type="SUPFAM" id="SSF53448">
    <property type="entry name" value="Nucleotide-diphospho-sugar transferases"/>
    <property type="match status" value="1"/>
</dbReference>